<name>CDK2H_PLACU</name>
<accession>Q4Y4B1</accession>
<accession>A0A4V0K9I8</accession>
<proteinExistence type="inferred from homology"/>
<protein>
    <recommendedName>
        <fullName evidence="7">Cyclin-dependent kinase 2 homolog</fullName>
        <ecNumber evidence="3">2.7.11.22</ecNumber>
        <ecNumber evidence="3">2.7.11.23</ecNumber>
    </recommendedName>
    <alternativeName>
        <fullName evidence="3">Cell division control protein 2 homolog</fullName>
    </alternativeName>
    <alternativeName>
        <fullName evidence="4">cdc2-related kinase 2</fullName>
    </alternativeName>
</protein>
<organism evidence="9">
    <name type="scientific">Plasmodium chabaudi chabaudi</name>
    <dbReference type="NCBI Taxonomy" id="31271"/>
    <lineage>
        <taxon>Eukaryota</taxon>
        <taxon>Sar</taxon>
        <taxon>Alveolata</taxon>
        <taxon>Apicomplexa</taxon>
        <taxon>Aconoidasida</taxon>
        <taxon>Haemosporida</taxon>
        <taxon>Plasmodiidae</taxon>
        <taxon>Plasmodium</taxon>
        <taxon>Plasmodium (Vinckeia)</taxon>
    </lineage>
</organism>
<sequence>MEKYHGLEKIGEGTYGVVYKAQNSDGESFALKKIRLEKEDEGIPSTAIREISILKELRHSNIVKLYDVIHAKKRLILVFEHLDQDLKKLIDVCDGGLESVTAKSFLLQLLNGIAYCHEHRVLHRDLKPQNLLINREGELKIADFGLARAFGIPARRYTHEVVTLWYRAPDILMGSKKYSTPIDIWSVGCIFAEMVNGRPLFPGVSDTDQLMRIFKILGTPNSQNWPDVFKLPKYDPNFPVYEPLPWETFIKGLDDTGIDLLSKMLKLDPNQRITAKQAIEHPYFKETS</sequence>
<keyword id="KW-0067">ATP-binding</keyword>
<keyword id="KW-0131">Cell cycle</keyword>
<keyword id="KW-0132">Cell division</keyword>
<keyword id="KW-0963">Cytoplasm</keyword>
<keyword id="KW-0418">Kinase</keyword>
<keyword id="KW-0460">Magnesium</keyword>
<keyword id="KW-0479">Metal-binding</keyword>
<keyword id="KW-0498">Mitosis</keyword>
<keyword id="KW-0547">Nucleotide-binding</keyword>
<keyword id="KW-0597">Phosphoprotein</keyword>
<keyword id="KW-0723">Serine/threonine-protein kinase</keyword>
<keyword id="KW-0808">Transferase</keyword>
<feature type="chain" id="PRO_0000232669" description="Cyclin-dependent kinase 2 homolog">
    <location>
        <begin position="1"/>
        <end position="288"/>
    </location>
</feature>
<feature type="domain" description="Protein kinase" evidence="5">
    <location>
        <begin position="4"/>
        <end position="284"/>
    </location>
</feature>
<feature type="active site" description="Proton acceptor" evidence="5 6">
    <location>
        <position position="125"/>
    </location>
</feature>
<feature type="binding site" evidence="5">
    <location>
        <begin position="10"/>
        <end position="18"/>
    </location>
    <ligand>
        <name>ATP</name>
        <dbReference type="ChEBI" id="CHEBI:30616"/>
    </ligand>
</feature>
<feature type="binding site" evidence="5">
    <location>
        <position position="32"/>
    </location>
    <ligand>
        <name>ATP</name>
        <dbReference type="ChEBI" id="CHEBI:30616"/>
    </ligand>
</feature>
<feature type="modified residue" description="Phosphothreonine" evidence="2">
    <location>
        <position position="14"/>
    </location>
</feature>
<feature type="modified residue" description="Phosphotyrosine" evidence="2">
    <location>
        <position position="15"/>
    </location>
</feature>
<feature type="modified residue" description="Phosphothreonine" evidence="2">
    <location>
        <position position="158"/>
    </location>
</feature>
<gene>
    <name evidence="4" type="primary">CRK2</name>
    <name type="ORF">PC000220.01.0</name>
    <name evidence="8" type="ORF">PCHAS_1132700</name>
</gene>
<comment type="function">
    <text evidence="1 3">Serine/threonine-protein kinase (By similarity). Involved in the control of the cell cycle. Required for entry into S-phase and mitosis (By similarity). Probable component of the kinase complex that phosphorylates the repetitive C-terminus of RNA polymerase II (By similarity).</text>
</comment>
<comment type="catalytic activity">
    <reaction evidence="3">
        <text>L-seryl-[protein] + ATP = O-phospho-L-seryl-[protein] + ADP + H(+)</text>
        <dbReference type="Rhea" id="RHEA:17989"/>
        <dbReference type="Rhea" id="RHEA-COMP:9863"/>
        <dbReference type="Rhea" id="RHEA-COMP:11604"/>
        <dbReference type="ChEBI" id="CHEBI:15378"/>
        <dbReference type="ChEBI" id="CHEBI:29999"/>
        <dbReference type="ChEBI" id="CHEBI:30616"/>
        <dbReference type="ChEBI" id="CHEBI:83421"/>
        <dbReference type="ChEBI" id="CHEBI:456216"/>
        <dbReference type="EC" id="2.7.11.22"/>
    </reaction>
</comment>
<comment type="catalytic activity">
    <reaction evidence="3">
        <text>L-threonyl-[protein] + ATP = O-phospho-L-threonyl-[protein] + ADP + H(+)</text>
        <dbReference type="Rhea" id="RHEA:46608"/>
        <dbReference type="Rhea" id="RHEA-COMP:11060"/>
        <dbReference type="Rhea" id="RHEA-COMP:11605"/>
        <dbReference type="ChEBI" id="CHEBI:15378"/>
        <dbReference type="ChEBI" id="CHEBI:30013"/>
        <dbReference type="ChEBI" id="CHEBI:30616"/>
        <dbReference type="ChEBI" id="CHEBI:61977"/>
        <dbReference type="ChEBI" id="CHEBI:456216"/>
        <dbReference type="EC" id="2.7.11.22"/>
    </reaction>
</comment>
<comment type="catalytic activity">
    <reaction evidence="3">
        <text>[DNA-directed RNA polymerase] + ATP = phospho-[DNA-directed RNA polymerase] + ADP + H(+)</text>
        <dbReference type="Rhea" id="RHEA:10216"/>
        <dbReference type="Rhea" id="RHEA-COMP:11321"/>
        <dbReference type="Rhea" id="RHEA-COMP:11322"/>
        <dbReference type="ChEBI" id="CHEBI:15378"/>
        <dbReference type="ChEBI" id="CHEBI:30616"/>
        <dbReference type="ChEBI" id="CHEBI:43176"/>
        <dbReference type="ChEBI" id="CHEBI:68546"/>
        <dbReference type="ChEBI" id="CHEBI:456216"/>
        <dbReference type="EC" id="2.7.11.23"/>
    </reaction>
</comment>
<comment type="cofactor">
    <cofactor evidence="3">
        <name>Mg(2+)</name>
        <dbReference type="ChEBI" id="CHEBI:18420"/>
    </cofactor>
</comment>
<comment type="activity regulation">
    <text evidence="2">Phosphorylation at Thr-14 or Tyr-15 inactivates the enzyme, while phosphorylation at Thr-158 activates it.</text>
</comment>
<comment type="subunit">
    <text evidence="3">May form a complex composed of at least the catalytic subunit CRK2 and a cyclin.</text>
</comment>
<comment type="subcellular location">
    <subcellularLocation>
        <location evidence="1">Cytoplasm</location>
    </subcellularLocation>
</comment>
<comment type="similarity">
    <text evidence="7">Belongs to the protein kinase superfamily. CMGC Ser/Thr protein kinase family. CDC2/CDKX subfamily.</text>
</comment>
<evidence type="ECO:0000250" key="1">
    <source>
        <dbReference type="UniProtKB" id="P04551"/>
    </source>
</evidence>
<evidence type="ECO:0000250" key="2">
    <source>
        <dbReference type="UniProtKB" id="P24941"/>
    </source>
</evidence>
<evidence type="ECO:0000250" key="3">
    <source>
        <dbReference type="UniProtKB" id="P61075"/>
    </source>
</evidence>
<evidence type="ECO:0000250" key="4">
    <source>
        <dbReference type="UniProtKB" id="Q4Z6R1"/>
    </source>
</evidence>
<evidence type="ECO:0000255" key="5">
    <source>
        <dbReference type="PROSITE-ProRule" id="PRU00159"/>
    </source>
</evidence>
<evidence type="ECO:0000255" key="6">
    <source>
        <dbReference type="PROSITE-ProRule" id="PRU10027"/>
    </source>
</evidence>
<evidence type="ECO:0000305" key="7"/>
<evidence type="ECO:0000312" key="8">
    <source>
        <dbReference type="EMBL" id="VTZ69322.1"/>
    </source>
</evidence>
<evidence type="ECO:0000312" key="9">
    <source>
        <dbReference type="Proteomes" id="UP000071118"/>
    </source>
</evidence>
<dbReference type="EC" id="2.7.11.22" evidence="3"/>
<dbReference type="EC" id="2.7.11.23" evidence="3"/>
<dbReference type="EMBL" id="LK022888">
    <property type="protein sequence ID" value="VTZ69322.1"/>
    <property type="molecule type" value="Genomic_DNA"/>
</dbReference>
<dbReference type="RefSeq" id="XP_016654040.1">
    <property type="nucleotide sequence ID" value="XM_016798662.1"/>
</dbReference>
<dbReference type="SMR" id="Q4Y4B1"/>
<dbReference type="GeneID" id="3496351"/>
<dbReference type="KEGG" id="pcb:PCHAS_1132700"/>
<dbReference type="VEuPathDB" id="PlasmoDB:PCHAS_1132700"/>
<dbReference type="eggNOG" id="KOG0594">
    <property type="taxonomic scope" value="Eukaryota"/>
</dbReference>
<dbReference type="HOGENOM" id="CLU_000288_181_1_1"/>
<dbReference type="OrthoDB" id="1732493at2759"/>
<dbReference type="Proteomes" id="UP000071118">
    <property type="component" value="Chromosome 11"/>
</dbReference>
<dbReference type="GO" id="GO:0005737">
    <property type="term" value="C:cytoplasm"/>
    <property type="evidence" value="ECO:0007669"/>
    <property type="project" value="UniProtKB-SubCell"/>
</dbReference>
<dbReference type="GO" id="GO:0005634">
    <property type="term" value="C:nucleus"/>
    <property type="evidence" value="ECO:0007669"/>
    <property type="project" value="TreeGrafter"/>
</dbReference>
<dbReference type="GO" id="GO:0005524">
    <property type="term" value="F:ATP binding"/>
    <property type="evidence" value="ECO:0007669"/>
    <property type="project" value="UniProtKB-KW"/>
</dbReference>
<dbReference type="GO" id="GO:0004693">
    <property type="term" value="F:cyclin-dependent protein serine/threonine kinase activity"/>
    <property type="evidence" value="ECO:0007669"/>
    <property type="project" value="UniProtKB-EC"/>
</dbReference>
<dbReference type="GO" id="GO:0046872">
    <property type="term" value="F:metal ion binding"/>
    <property type="evidence" value="ECO:0007669"/>
    <property type="project" value="UniProtKB-KW"/>
</dbReference>
<dbReference type="GO" id="GO:0106310">
    <property type="term" value="F:protein serine kinase activity"/>
    <property type="evidence" value="ECO:0007669"/>
    <property type="project" value="RHEA"/>
</dbReference>
<dbReference type="GO" id="GO:0008353">
    <property type="term" value="F:RNA polymerase II CTD heptapeptide repeat kinase activity"/>
    <property type="evidence" value="ECO:0007669"/>
    <property type="project" value="UniProtKB-EC"/>
</dbReference>
<dbReference type="GO" id="GO:0051301">
    <property type="term" value="P:cell division"/>
    <property type="evidence" value="ECO:0007669"/>
    <property type="project" value="UniProtKB-KW"/>
</dbReference>
<dbReference type="CDD" id="cd07829">
    <property type="entry name" value="STKc_CDK_like"/>
    <property type="match status" value="1"/>
</dbReference>
<dbReference type="FunFam" id="3.30.200.20:FF:000396">
    <property type="entry name" value="Cdc2-related kinase 2, putative"/>
    <property type="match status" value="1"/>
</dbReference>
<dbReference type="FunFam" id="1.10.510.10:FF:000184">
    <property type="entry name" value="cyclin-dependent kinase 5 homolog"/>
    <property type="match status" value="1"/>
</dbReference>
<dbReference type="Gene3D" id="3.30.200.20">
    <property type="entry name" value="Phosphorylase Kinase, domain 1"/>
    <property type="match status" value="1"/>
</dbReference>
<dbReference type="Gene3D" id="1.10.510.10">
    <property type="entry name" value="Transferase(Phosphotransferase) domain 1"/>
    <property type="match status" value="1"/>
</dbReference>
<dbReference type="InterPro" id="IPR050108">
    <property type="entry name" value="CDK"/>
</dbReference>
<dbReference type="InterPro" id="IPR011009">
    <property type="entry name" value="Kinase-like_dom_sf"/>
</dbReference>
<dbReference type="InterPro" id="IPR000719">
    <property type="entry name" value="Prot_kinase_dom"/>
</dbReference>
<dbReference type="InterPro" id="IPR017441">
    <property type="entry name" value="Protein_kinase_ATP_BS"/>
</dbReference>
<dbReference type="InterPro" id="IPR008271">
    <property type="entry name" value="Ser/Thr_kinase_AS"/>
</dbReference>
<dbReference type="PANTHER" id="PTHR24056">
    <property type="entry name" value="CELL DIVISION PROTEIN KINASE"/>
    <property type="match status" value="1"/>
</dbReference>
<dbReference type="PANTHER" id="PTHR24056:SF46">
    <property type="entry name" value="CYCLIN-DEPENDENT KINASE 5"/>
    <property type="match status" value="1"/>
</dbReference>
<dbReference type="Pfam" id="PF00069">
    <property type="entry name" value="Pkinase"/>
    <property type="match status" value="1"/>
</dbReference>
<dbReference type="SMART" id="SM00220">
    <property type="entry name" value="S_TKc"/>
    <property type="match status" value="1"/>
</dbReference>
<dbReference type="SUPFAM" id="SSF56112">
    <property type="entry name" value="Protein kinase-like (PK-like)"/>
    <property type="match status" value="1"/>
</dbReference>
<dbReference type="PROSITE" id="PS00107">
    <property type="entry name" value="PROTEIN_KINASE_ATP"/>
    <property type="match status" value="1"/>
</dbReference>
<dbReference type="PROSITE" id="PS50011">
    <property type="entry name" value="PROTEIN_KINASE_DOM"/>
    <property type="match status" value="1"/>
</dbReference>
<dbReference type="PROSITE" id="PS00108">
    <property type="entry name" value="PROTEIN_KINASE_ST"/>
    <property type="match status" value="1"/>
</dbReference>
<reference evidence="9" key="1">
    <citation type="journal article" date="2014" name="BMC Biol.">
        <title>A comprehensive evaluation of rodent malaria parasite genomes and gene expression.</title>
        <authorList>
            <person name="Otto T.D."/>
            <person name="Bohme U."/>
            <person name="Jackson A.P."/>
            <person name="Hunt M."/>
            <person name="Franke-Fayard B."/>
            <person name="Hoeijmakers W.A."/>
            <person name="Religa A.A."/>
            <person name="Robertson L."/>
            <person name="Sanders M."/>
            <person name="Ogun S.A."/>
            <person name="Cunningham D."/>
            <person name="Erhart A."/>
            <person name="Billker O."/>
            <person name="Khan S.M."/>
            <person name="Stunnenberg H.G."/>
            <person name="Langhorne J."/>
            <person name="Holder A.A."/>
            <person name="Waters A.P."/>
            <person name="Newbold C.I."/>
            <person name="Pain A."/>
            <person name="Berriman M."/>
            <person name="Janse C.J."/>
        </authorList>
    </citation>
    <scope>NUCLEOTIDE SEQUENCE [LARGE SCALE GENOMIC DNA]</scope>
    <source>
        <strain evidence="9">AS</strain>
    </source>
</reference>